<accession>Q1KXX1</accession>
<name>RPOC1_HELAN</name>
<protein>
    <recommendedName>
        <fullName evidence="1">DNA-directed RNA polymerase subunit beta'</fullName>
        <ecNumber evidence="1">2.7.7.6</ecNumber>
    </recommendedName>
    <alternativeName>
        <fullName evidence="1">PEP</fullName>
    </alternativeName>
    <alternativeName>
        <fullName evidence="1">Plastid-encoded RNA polymerase subunit beta'</fullName>
        <shortName evidence="1">RNA polymerase subunit beta'</shortName>
    </alternativeName>
</protein>
<geneLocation type="chloroplast"/>
<sequence>MIDRYTHQQLRIGLVSPQQISTWSKKILPNGEIVGEVTKPYTFHYKTNKPEKDGLFCERIFGPIKSGICACGNYRVIGDEKEDPQFCEQCGVEFVDSRIRRYQMGYIKLAYPVMHVWYLKRLPSYIVNLLDKPLNELEDLVYCGFYFARPIDKKPTFLRLRGLLEYEIQPWKYRIPIFFTTRSFDTFRNREMSTGGGSIRQQLANLDLRMIIDYSLVEWKELEEEESTGNEWEDRKVGRRKDFLLRRMELAKHFIRTNIEPKWMVLRLLPVLPPELRPIYHIDEDKLVTSDINEIYRRIIYRNNTLTDLLTTSIATPEELIISQEKLLQEAVDALLDNGICGQPMRDDHNRIYKSLSDVIEGKEGRVRETLLGKRVDYSGRSVIVVGPSLSLHRCGLPREIAIELFQAFVIRDLIRKHLASNIGVAKSQIRKKKPIVWEILQEILDDHPVLLNRAPTLHRLGIQAFLPVLVEGRAICLHPLVCKGFNADFDGDQMAVHVPLSLEAQAEARLLMFSHMNLLSPTIGDPISAPTQDMLSGLYVLTSGNRRGICVNRYNPCNRRNYQNEDNNYKYTKKKEPFFCNAYDAIGAYRQKRINLGSPLWLRWRLDQRVIAAREAPIEIHYESLGTYYEIYGHYLIVRSIKKEILYIYIRTTLGHISLYREIEEAIQGFWQGCYNSMLPARIRVSPG</sequence>
<keyword id="KW-0150">Chloroplast</keyword>
<keyword id="KW-0240">DNA-directed RNA polymerase</keyword>
<keyword id="KW-0460">Magnesium</keyword>
<keyword id="KW-0479">Metal-binding</keyword>
<keyword id="KW-0548">Nucleotidyltransferase</keyword>
<keyword id="KW-0934">Plastid</keyword>
<keyword id="KW-0804">Transcription</keyword>
<keyword id="KW-0808">Transferase</keyword>
<keyword id="KW-0862">Zinc</keyword>
<proteinExistence type="inferred from homology"/>
<gene>
    <name evidence="1" type="primary">rpoC1</name>
</gene>
<dbReference type="EC" id="2.7.7.6" evidence="1"/>
<dbReference type="EMBL" id="DQ383815">
    <property type="protein sequence ID" value="ABD47134.1"/>
    <property type="status" value="ALT_INIT"/>
    <property type="molecule type" value="Genomic_DNA"/>
</dbReference>
<dbReference type="RefSeq" id="YP_588105.2">
    <property type="nucleotide sequence ID" value="NC_007977.1"/>
</dbReference>
<dbReference type="SMR" id="Q1KXX1"/>
<dbReference type="GeneID" id="4055651"/>
<dbReference type="KEGG" id="han:4055651"/>
<dbReference type="OrthoDB" id="1862828at2759"/>
<dbReference type="GO" id="GO:0009507">
    <property type="term" value="C:chloroplast"/>
    <property type="evidence" value="ECO:0007669"/>
    <property type="project" value="UniProtKB-SubCell"/>
</dbReference>
<dbReference type="GO" id="GO:0000428">
    <property type="term" value="C:DNA-directed RNA polymerase complex"/>
    <property type="evidence" value="ECO:0007669"/>
    <property type="project" value="UniProtKB-KW"/>
</dbReference>
<dbReference type="GO" id="GO:0005739">
    <property type="term" value="C:mitochondrion"/>
    <property type="evidence" value="ECO:0007669"/>
    <property type="project" value="GOC"/>
</dbReference>
<dbReference type="GO" id="GO:0003677">
    <property type="term" value="F:DNA binding"/>
    <property type="evidence" value="ECO:0007669"/>
    <property type="project" value="UniProtKB-UniRule"/>
</dbReference>
<dbReference type="GO" id="GO:0003899">
    <property type="term" value="F:DNA-directed RNA polymerase activity"/>
    <property type="evidence" value="ECO:0007669"/>
    <property type="project" value="UniProtKB-UniRule"/>
</dbReference>
<dbReference type="GO" id="GO:0000287">
    <property type="term" value="F:magnesium ion binding"/>
    <property type="evidence" value="ECO:0007669"/>
    <property type="project" value="UniProtKB-UniRule"/>
</dbReference>
<dbReference type="GO" id="GO:0008270">
    <property type="term" value="F:zinc ion binding"/>
    <property type="evidence" value="ECO:0007669"/>
    <property type="project" value="UniProtKB-UniRule"/>
</dbReference>
<dbReference type="GO" id="GO:0006351">
    <property type="term" value="P:DNA-templated transcription"/>
    <property type="evidence" value="ECO:0007669"/>
    <property type="project" value="UniProtKB-UniRule"/>
</dbReference>
<dbReference type="FunFam" id="4.10.860.120:FF:000007">
    <property type="entry name" value="DNA-directed RNA polymerase subunit gamma"/>
    <property type="match status" value="1"/>
</dbReference>
<dbReference type="Gene3D" id="1.10.40.90">
    <property type="match status" value="1"/>
</dbReference>
<dbReference type="Gene3D" id="2.40.40.20">
    <property type="match status" value="1"/>
</dbReference>
<dbReference type="Gene3D" id="4.10.860.120">
    <property type="entry name" value="RNA polymerase II, clamp domain"/>
    <property type="match status" value="1"/>
</dbReference>
<dbReference type="Gene3D" id="1.10.274.100">
    <property type="entry name" value="RNA polymerase Rpb1, domain 3"/>
    <property type="match status" value="1"/>
</dbReference>
<dbReference type="HAMAP" id="MF_01323">
    <property type="entry name" value="RNApol_bact_RpoC1"/>
    <property type="match status" value="1"/>
</dbReference>
<dbReference type="InterPro" id="IPR045867">
    <property type="entry name" value="DNA-dir_RpoC_beta_prime"/>
</dbReference>
<dbReference type="InterPro" id="IPR000722">
    <property type="entry name" value="RNA_pol_asu"/>
</dbReference>
<dbReference type="InterPro" id="IPR006592">
    <property type="entry name" value="RNA_pol_N"/>
</dbReference>
<dbReference type="InterPro" id="IPR007080">
    <property type="entry name" value="RNA_pol_Rpb1_1"/>
</dbReference>
<dbReference type="InterPro" id="IPR042102">
    <property type="entry name" value="RNA_pol_Rpb1_3_sf"/>
</dbReference>
<dbReference type="InterPro" id="IPR044893">
    <property type="entry name" value="RNA_pol_Rpb1_clamp_domain"/>
</dbReference>
<dbReference type="InterPro" id="IPR034678">
    <property type="entry name" value="RNApol_RpoC1"/>
</dbReference>
<dbReference type="PANTHER" id="PTHR19376">
    <property type="entry name" value="DNA-DIRECTED RNA POLYMERASE"/>
    <property type="match status" value="1"/>
</dbReference>
<dbReference type="PANTHER" id="PTHR19376:SF68">
    <property type="entry name" value="DNA-DIRECTED RNA POLYMERASE SUBUNIT BETA"/>
    <property type="match status" value="1"/>
</dbReference>
<dbReference type="Pfam" id="PF04997">
    <property type="entry name" value="RNA_pol_Rpb1_1"/>
    <property type="match status" value="2"/>
</dbReference>
<dbReference type="Pfam" id="PF00623">
    <property type="entry name" value="RNA_pol_Rpb1_2"/>
    <property type="match status" value="2"/>
</dbReference>
<dbReference type="SMART" id="SM00663">
    <property type="entry name" value="RPOLA_N"/>
    <property type="match status" value="1"/>
</dbReference>
<dbReference type="SUPFAM" id="SSF64484">
    <property type="entry name" value="beta and beta-prime subunits of DNA dependent RNA-polymerase"/>
    <property type="match status" value="1"/>
</dbReference>
<comment type="function">
    <text evidence="1">DNA-dependent RNA polymerase catalyzes the transcription of DNA into RNA using the four ribonucleoside triphosphates as substrates.</text>
</comment>
<comment type="catalytic activity">
    <reaction evidence="1">
        <text>RNA(n) + a ribonucleoside 5'-triphosphate = RNA(n+1) + diphosphate</text>
        <dbReference type="Rhea" id="RHEA:21248"/>
        <dbReference type="Rhea" id="RHEA-COMP:14527"/>
        <dbReference type="Rhea" id="RHEA-COMP:17342"/>
        <dbReference type="ChEBI" id="CHEBI:33019"/>
        <dbReference type="ChEBI" id="CHEBI:61557"/>
        <dbReference type="ChEBI" id="CHEBI:140395"/>
        <dbReference type="EC" id="2.7.7.6"/>
    </reaction>
</comment>
<comment type="cofactor">
    <cofactor evidence="1">
        <name>Mg(2+)</name>
        <dbReference type="ChEBI" id="CHEBI:18420"/>
    </cofactor>
    <text evidence="1">Binds 1 Mg(2+) ion per subunit.</text>
</comment>
<comment type="cofactor">
    <cofactor evidence="1">
        <name>Zn(2+)</name>
        <dbReference type="ChEBI" id="CHEBI:29105"/>
    </cofactor>
    <text evidence="1">Binds 1 Zn(2+) ion per subunit.</text>
</comment>
<comment type="subunit">
    <text evidence="1">In plastids the minimal PEP RNA polymerase catalytic core is composed of four subunits: alpha, beta, beta', and beta''. When a (nuclear-encoded) sigma factor is associated with the core the holoenzyme is formed, which can initiate transcription.</text>
</comment>
<comment type="subcellular location">
    <subcellularLocation>
        <location evidence="1">Plastid</location>
        <location evidence="1">Chloroplast</location>
    </subcellularLocation>
</comment>
<comment type="similarity">
    <text evidence="1">Belongs to the RNA polymerase beta' chain family. RpoC1 subfamily.</text>
</comment>
<comment type="sequence caution" evidence="2">
    <conflict type="erroneous initiation">
        <sequence resource="EMBL-CDS" id="ABD47134"/>
    </conflict>
    <text>Extended N-terminus.</text>
</comment>
<feature type="chain" id="PRO_0000277169" description="DNA-directed RNA polymerase subunit beta'">
    <location>
        <begin position="1"/>
        <end position="689"/>
    </location>
</feature>
<feature type="binding site" evidence="1">
    <location>
        <position position="69"/>
    </location>
    <ligand>
        <name>Zn(2+)</name>
        <dbReference type="ChEBI" id="CHEBI:29105"/>
    </ligand>
</feature>
<feature type="binding site" evidence="1">
    <location>
        <position position="71"/>
    </location>
    <ligand>
        <name>Zn(2+)</name>
        <dbReference type="ChEBI" id="CHEBI:29105"/>
    </ligand>
</feature>
<feature type="binding site" evidence="1">
    <location>
        <position position="87"/>
    </location>
    <ligand>
        <name>Zn(2+)</name>
        <dbReference type="ChEBI" id="CHEBI:29105"/>
    </ligand>
</feature>
<feature type="binding site" evidence="1">
    <location>
        <position position="90"/>
    </location>
    <ligand>
        <name>Zn(2+)</name>
        <dbReference type="ChEBI" id="CHEBI:29105"/>
    </ligand>
</feature>
<feature type="binding site" evidence="1">
    <location>
        <position position="489"/>
    </location>
    <ligand>
        <name>Mg(2+)</name>
        <dbReference type="ChEBI" id="CHEBI:18420"/>
    </ligand>
</feature>
<feature type="binding site" evidence="1">
    <location>
        <position position="491"/>
    </location>
    <ligand>
        <name>Mg(2+)</name>
        <dbReference type="ChEBI" id="CHEBI:18420"/>
    </ligand>
</feature>
<feature type="binding site" evidence="1">
    <location>
        <position position="493"/>
    </location>
    <ligand>
        <name>Mg(2+)</name>
        <dbReference type="ChEBI" id="CHEBI:18420"/>
    </ligand>
</feature>
<evidence type="ECO:0000255" key="1">
    <source>
        <dbReference type="HAMAP-Rule" id="MF_01323"/>
    </source>
</evidence>
<evidence type="ECO:0000305" key="2"/>
<reference key="1">
    <citation type="submission" date="2006-01" db="EMBL/GenBank/DDBJ databases">
        <title>A comparison of the first two published chloroplast genomes in Asteraceae: Lactuca and Helianthus.</title>
        <authorList>
            <person name="Timme R.E."/>
            <person name="Kuehl J.V."/>
            <person name="Boore J.L."/>
            <person name="Jansen R.K."/>
        </authorList>
    </citation>
    <scope>NUCLEOTIDE SEQUENCE [LARGE SCALE GENOMIC DNA]</scope>
    <source>
        <strain>cv. HA383</strain>
    </source>
</reference>
<organism>
    <name type="scientific">Helianthus annuus</name>
    <name type="common">Common sunflower</name>
    <dbReference type="NCBI Taxonomy" id="4232"/>
    <lineage>
        <taxon>Eukaryota</taxon>
        <taxon>Viridiplantae</taxon>
        <taxon>Streptophyta</taxon>
        <taxon>Embryophyta</taxon>
        <taxon>Tracheophyta</taxon>
        <taxon>Spermatophyta</taxon>
        <taxon>Magnoliopsida</taxon>
        <taxon>eudicotyledons</taxon>
        <taxon>Gunneridae</taxon>
        <taxon>Pentapetalae</taxon>
        <taxon>asterids</taxon>
        <taxon>campanulids</taxon>
        <taxon>Asterales</taxon>
        <taxon>Asteraceae</taxon>
        <taxon>Asteroideae</taxon>
        <taxon>Heliantheae alliance</taxon>
        <taxon>Heliantheae</taxon>
        <taxon>Helianthus</taxon>
    </lineage>
</organism>